<feature type="signal peptide" evidence="1">
    <location>
        <begin position="1"/>
        <end position="20"/>
    </location>
</feature>
<feature type="chain" id="PRO_0000029312" description="Foldase protein PrsA 2">
    <location>
        <begin position="21"/>
        <end position="293"/>
    </location>
</feature>
<feature type="domain" description="PpiC" evidence="1">
    <location>
        <begin position="135"/>
        <end position="226"/>
    </location>
</feature>
<feature type="lipid moiety-binding region" description="N-palmitoyl cysteine" evidence="1">
    <location>
        <position position="21"/>
    </location>
</feature>
<feature type="lipid moiety-binding region" description="S-diacylglycerol cysteine" evidence="1">
    <location>
        <position position="21"/>
    </location>
</feature>
<sequence>MKKKLILGLVMMMALFSLAACGGGGDVVKTDSGDVTQDELYDAMKDKYGSEFVQQLTFEKILGDKYKVSDEDVDKKFNEYKSQYGDQFSAVLAQSGLTEKSFKSQLKYNLLVQKATEANTDTSDKTLKKYYETWQPDITVSHILVADENKAKEVEQKLKDGAKFADLAKEYSTDTATKDNGGQLAPFGPGKMDPAFEKAAYALKNKGDISAPVKTQYGYHIIQMDKPATKTTFEKDKKAVKASYLESQLTTENMQKTLKKEYKDANVKVEDKDLKDAFKDFDGSSSSDSDSSK</sequence>
<reference key="1">
    <citation type="journal article" date="2004" name="Nucleic Acids Res.">
        <title>Whole genome comparisons of serotype 4b and 1/2a strains of the food-borne pathogen Listeria monocytogenes reveal new insights into the core genome components of this species.</title>
        <authorList>
            <person name="Nelson K.E."/>
            <person name="Fouts D.E."/>
            <person name="Mongodin E.F."/>
            <person name="Ravel J."/>
            <person name="DeBoy R.T."/>
            <person name="Kolonay J.F."/>
            <person name="Rasko D.A."/>
            <person name="Angiuoli S.V."/>
            <person name="Gill S.R."/>
            <person name="Paulsen I.T."/>
            <person name="Peterson J.D."/>
            <person name="White O."/>
            <person name="Nelson W.C."/>
            <person name="Nierman W.C."/>
            <person name="Beanan M.J."/>
            <person name="Brinkac L.M."/>
            <person name="Daugherty S.C."/>
            <person name="Dodson R.J."/>
            <person name="Durkin A.S."/>
            <person name="Madupu R."/>
            <person name="Haft D.H."/>
            <person name="Selengut J."/>
            <person name="Van Aken S.E."/>
            <person name="Khouri H.M."/>
            <person name="Fedorova N."/>
            <person name="Forberger H.A."/>
            <person name="Tran B."/>
            <person name="Kathariou S."/>
            <person name="Wonderling L.D."/>
            <person name="Uhlich G.A."/>
            <person name="Bayles D.O."/>
            <person name="Luchansky J.B."/>
            <person name="Fraser C.M."/>
        </authorList>
    </citation>
    <scope>NUCLEOTIDE SEQUENCE [LARGE SCALE GENOMIC DNA]</scope>
    <source>
        <strain>F2365</strain>
    </source>
</reference>
<keyword id="KW-1003">Cell membrane</keyword>
<keyword id="KW-0413">Isomerase</keyword>
<keyword id="KW-0449">Lipoprotein</keyword>
<keyword id="KW-0472">Membrane</keyword>
<keyword id="KW-0564">Palmitate</keyword>
<keyword id="KW-0697">Rotamase</keyword>
<keyword id="KW-0732">Signal</keyword>
<proteinExistence type="inferred from homology"/>
<gene>
    <name evidence="1" type="primary">prsA2</name>
    <name type="ordered locus">LMOf2365_2252</name>
</gene>
<name>PRSA2_LISMF</name>
<protein>
    <recommendedName>
        <fullName evidence="1">Foldase protein PrsA 2</fullName>
        <ecNumber evidence="1">5.2.1.8</ecNumber>
    </recommendedName>
</protein>
<comment type="function">
    <text evidence="1">Plays a major role in protein secretion by helping the post-translocational extracellular folding of several secreted proteins.</text>
</comment>
<comment type="catalytic activity">
    <reaction evidence="1">
        <text>[protein]-peptidylproline (omega=180) = [protein]-peptidylproline (omega=0)</text>
        <dbReference type="Rhea" id="RHEA:16237"/>
        <dbReference type="Rhea" id="RHEA-COMP:10747"/>
        <dbReference type="Rhea" id="RHEA-COMP:10748"/>
        <dbReference type="ChEBI" id="CHEBI:83833"/>
        <dbReference type="ChEBI" id="CHEBI:83834"/>
        <dbReference type="EC" id="5.2.1.8"/>
    </reaction>
</comment>
<comment type="subcellular location">
    <subcellularLocation>
        <location evidence="1">Cell membrane</location>
        <topology evidence="1">Lipid-anchor</topology>
    </subcellularLocation>
</comment>
<comment type="similarity">
    <text evidence="1">Belongs to the PrsA family.</text>
</comment>
<accession>Q71XE6</accession>
<evidence type="ECO:0000255" key="1">
    <source>
        <dbReference type="HAMAP-Rule" id="MF_01145"/>
    </source>
</evidence>
<dbReference type="EC" id="5.2.1.8" evidence="1"/>
<dbReference type="EMBL" id="AE017262">
    <property type="protein sequence ID" value="AAT05019.1"/>
    <property type="molecule type" value="Genomic_DNA"/>
</dbReference>
<dbReference type="RefSeq" id="WP_003726773.1">
    <property type="nucleotide sequence ID" value="NC_002973.6"/>
</dbReference>
<dbReference type="SMR" id="Q71XE6"/>
<dbReference type="KEGG" id="lmf:LMOf2365_2252"/>
<dbReference type="HOGENOM" id="CLU_034646_6_1_9"/>
<dbReference type="PHI-base" id="PHI:6137"/>
<dbReference type="PHI-base" id="PHI:7070"/>
<dbReference type="GO" id="GO:0005886">
    <property type="term" value="C:plasma membrane"/>
    <property type="evidence" value="ECO:0007669"/>
    <property type="project" value="UniProtKB-SubCell"/>
</dbReference>
<dbReference type="GO" id="GO:0003755">
    <property type="term" value="F:peptidyl-prolyl cis-trans isomerase activity"/>
    <property type="evidence" value="ECO:0007669"/>
    <property type="project" value="UniProtKB-UniRule"/>
</dbReference>
<dbReference type="GO" id="GO:0006457">
    <property type="term" value="P:protein folding"/>
    <property type="evidence" value="ECO:0007669"/>
    <property type="project" value="UniProtKB-UniRule"/>
</dbReference>
<dbReference type="FunFam" id="3.10.50.40:FF:000042">
    <property type="entry name" value="Foldase protein PrsA"/>
    <property type="match status" value="1"/>
</dbReference>
<dbReference type="Gene3D" id="3.10.50.40">
    <property type="match status" value="1"/>
</dbReference>
<dbReference type="Gene3D" id="1.10.4030.10">
    <property type="entry name" value="Porin chaperone SurA, peptide-binding domain"/>
    <property type="match status" value="1"/>
</dbReference>
<dbReference type="HAMAP" id="MF_01145">
    <property type="entry name" value="Foldase_PrsA"/>
    <property type="match status" value="1"/>
</dbReference>
<dbReference type="InterPro" id="IPR023059">
    <property type="entry name" value="Foldase_PrsA"/>
</dbReference>
<dbReference type="InterPro" id="IPR046357">
    <property type="entry name" value="PPIase_dom_sf"/>
</dbReference>
<dbReference type="InterPro" id="IPR000297">
    <property type="entry name" value="PPIase_PpiC"/>
</dbReference>
<dbReference type="InterPro" id="IPR050245">
    <property type="entry name" value="PrsA_foldase"/>
</dbReference>
<dbReference type="InterPro" id="IPR027304">
    <property type="entry name" value="Trigger_fact/SurA_dom_sf"/>
</dbReference>
<dbReference type="PANTHER" id="PTHR47245:SF1">
    <property type="entry name" value="FOLDASE PROTEIN PRSA"/>
    <property type="match status" value="1"/>
</dbReference>
<dbReference type="PANTHER" id="PTHR47245">
    <property type="entry name" value="PEPTIDYLPROLYL ISOMERASE"/>
    <property type="match status" value="1"/>
</dbReference>
<dbReference type="Pfam" id="PF13616">
    <property type="entry name" value="Rotamase_3"/>
    <property type="match status" value="1"/>
</dbReference>
<dbReference type="SUPFAM" id="SSF54534">
    <property type="entry name" value="FKBP-like"/>
    <property type="match status" value="1"/>
</dbReference>
<dbReference type="SUPFAM" id="SSF109998">
    <property type="entry name" value="Triger factor/SurA peptide-binding domain-like"/>
    <property type="match status" value="1"/>
</dbReference>
<dbReference type="PROSITE" id="PS50198">
    <property type="entry name" value="PPIC_PPIASE_2"/>
    <property type="match status" value="1"/>
</dbReference>
<dbReference type="PROSITE" id="PS51257">
    <property type="entry name" value="PROKAR_LIPOPROTEIN"/>
    <property type="match status" value="1"/>
</dbReference>
<organism>
    <name type="scientific">Listeria monocytogenes serotype 4b (strain F2365)</name>
    <dbReference type="NCBI Taxonomy" id="265669"/>
    <lineage>
        <taxon>Bacteria</taxon>
        <taxon>Bacillati</taxon>
        <taxon>Bacillota</taxon>
        <taxon>Bacilli</taxon>
        <taxon>Bacillales</taxon>
        <taxon>Listeriaceae</taxon>
        <taxon>Listeria</taxon>
    </lineage>
</organism>